<protein>
    <recommendedName>
        <fullName>Protein atp12, mitochondrial</fullName>
    </recommendedName>
</protein>
<name>ATP12_SCHPO</name>
<organism>
    <name type="scientific">Schizosaccharomyces pombe (strain 972 / ATCC 24843)</name>
    <name type="common">Fission yeast</name>
    <dbReference type="NCBI Taxonomy" id="284812"/>
    <lineage>
        <taxon>Eukaryota</taxon>
        <taxon>Fungi</taxon>
        <taxon>Dikarya</taxon>
        <taxon>Ascomycota</taxon>
        <taxon>Taphrinomycotina</taxon>
        <taxon>Schizosaccharomycetes</taxon>
        <taxon>Schizosaccharomycetales</taxon>
        <taxon>Schizosaccharomycetaceae</taxon>
        <taxon>Schizosaccharomyces</taxon>
    </lineage>
</organism>
<dbReference type="EMBL" id="CU329670">
    <property type="protein sequence ID" value="CAB57430.2"/>
    <property type="molecule type" value="Genomic_DNA"/>
</dbReference>
<dbReference type="PIR" id="T39197">
    <property type="entry name" value="T39197"/>
</dbReference>
<dbReference type="RefSeq" id="NP_593355.2">
    <property type="nucleotide sequence ID" value="NM_001018787.2"/>
</dbReference>
<dbReference type="SMR" id="Q9UT16"/>
<dbReference type="BioGRID" id="279828">
    <property type="interactions" value="41"/>
</dbReference>
<dbReference type="FunCoup" id="Q9UT16">
    <property type="interactions" value="399"/>
</dbReference>
<dbReference type="STRING" id="284812.Q9UT16"/>
<dbReference type="iPTMnet" id="Q9UT16"/>
<dbReference type="PaxDb" id="4896-SPAC9.12c.1"/>
<dbReference type="EnsemblFungi" id="SPAC9.12c.1">
    <property type="protein sequence ID" value="SPAC9.12c.1:pep"/>
    <property type="gene ID" value="SPAC9.12c"/>
</dbReference>
<dbReference type="GeneID" id="2543406"/>
<dbReference type="KEGG" id="spo:2543406"/>
<dbReference type="PomBase" id="SPAC9.12c">
    <property type="gene designation" value="atp12"/>
</dbReference>
<dbReference type="VEuPathDB" id="FungiDB:SPAC9.12c"/>
<dbReference type="eggNOG" id="KOG3015">
    <property type="taxonomic scope" value="Eukaryota"/>
</dbReference>
<dbReference type="HOGENOM" id="CLU_047893_1_0_1"/>
<dbReference type="InParanoid" id="Q9UT16"/>
<dbReference type="OMA" id="WDPVLHW"/>
<dbReference type="PRO" id="PR:Q9UT16"/>
<dbReference type="Proteomes" id="UP000002485">
    <property type="component" value="Chromosome I"/>
</dbReference>
<dbReference type="GO" id="GO:0005759">
    <property type="term" value="C:mitochondrial matrix"/>
    <property type="evidence" value="ECO:0000266"/>
    <property type="project" value="PomBase"/>
</dbReference>
<dbReference type="GO" id="GO:0005739">
    <property type="term" value="C:mitochondrion"/>
    <property type="evidence" value="ECO:0007005"/>
    <property type="project" value="PomBase"/>
</dbReference>
<dbReference type="GO" id="GO:0051082">
    <property type="term" value="F:unfolded protein binding"/>
    <property type="evidence" value="ECO:0000266"/>
    <property type="project" value="PomBase"/>
</dbReference>
<dbReference type="GO" id="GO:0033615">
    <property type="term" value="P:mitochondrial proton-transporting ATP synthase complex assembly"/>
    <property type="evidence" value="ECO:0000318"/>
    <property type="project" value="GO_Central"/>
</dbReference>
<dbReference type="FunFam" id="1.10.3580.10:FF:000001">
    <property type="entry name" value="ATP synthase mitochondrial F1 complex assembly factor 2"/>
    <property type="match status" value="1"/>
</dbReference>
<dbReference type="Gene3D" id="1.10.3580.10">
    <property type="entry name" value="ATP12 ATPase"/>
    <property type="match status" value="1"/>
</dbReference>
<dbReference type="Gene3D" id="3.30.2180.10">
    <property type="entry name" value="ATP12-like"/>
    <property type="match status" value="1"/>
</dbReference>
<dbReference type="InterPro" id="IPR011419">
    <property type="entry name" value="ATP12_ATP_synth-F1-assembly"/>
</dbReference>
<dbReference type="InterPro" id="IPR042272">
    <property type="entry name" value="ATP12_ATP_synth-F1-assembly_N"/>
</dbReference>
<dbReference type="InterPro" id="IPR023335">
    <property type="entry name" value="ATP12_ortho_dom_sf"/>
</dbReference>
<dbReference type="PANTHER" id="PTHR21013:SF10">
    <property type="entry name" value="ATP SYNTHASE MITOCHONDRIAL F1 COMPLEX ASSEMBLY FACTOR 2"/>
    <property type="match status" value="1"/>
</dbReference>
<dbReference type="PANTHER" id="PTHR21013">
    <property type="entry name" value="ATP SYNTHASE MITOCHONDRIAL F1 COMPLEX ASSEMBLY FACTOR 2/ATP12 PROTEIN, MITOCHONDRIAL PRECURSOR"/>
    <property type="match status" value="1"/>
</dbReference>
<dbReference type="Pfam" id="PF07542">
    <property type="entry name" value="ATP12"/>
    <property type="match status" value="1"/>
</dbReference>
<dbReference type="SUPFAM" id="SSF160909">
    <property type="entry name" value="ATP12-like"/>
    <property type="match status" value="1"/>
</dbReference>
<gene>
    <name type="primary">atp12</name>
    <name type="ORF">SPAC9.12c</name>
</gene>
<comment type="function">
    <text evidence="1">Essential for the assembly of the mitochondrial F1-F0 complex.</text>
</comment>
<comment type="subcellular location">
    <subcellularLocation>
        <location evidence="3">Mitochondrion</location>
    </subcellularLocation>
</comment>
<comment type="similarity">
    <text evidence="4">Belongs to the ATP12 family.</text>
</comment>
<sequence>MLRSLQFYRLSSKNLLSFKTCYSFYSTKASSPLPQPSFRRFWKNTATKIQNGEVLIQLDGRNLKSPSGKIVKVPKEMELLAHLIALEWDRLPSTSVRQHNLPITSLVSRAIDISQFKKEEKELLSTQLIRFLDTDTILIYSPETEYEGKLLEEQKENWWPLKETFENKLGVQLSYLDGDAGIIAHKQTQETHERIRNWLSSLNSWQLAAFERSVSCCKSFIVSFMILKGYLNSEKAAALTNLELQYQTNRWGSLEDAHEIDNEDLKNKLASSAILSRCIEDMHDKSNEHAH</sequence>
<reference key="1">
    <citation type="journal article" date="2002" name="Nature">
        <title>The genome sequence of Schizosaccharomyces pombe.</title>
        <authorList>
            <person name="Wood V."/>
            <person name="Gwilliam R."/>
            <person name="Rajandream M.A."/>
            <person name="Lyne M.H."/>
            <person name="Lyne R."/>
            <person name="Stewart A."/>
            <person name="Sgouros J.G."/>
            <person name="Peat N."/>
            <person name="Hayles J."/>
            <person name="Baker S.G."/>
            <person name="Basham D."/>
            <person name="Bowman S."/>
            <person name="Brooks K."/>
            <person name="Brown D."/>
            <person name="Brown S."/>
            <person name="Chillingworth T."/>
            <person name="Churcher C.M."/>
            <person name="Collins M."/>
            <person name="Connor R."/>
            <person name="Cronin A."/>
            <person name="Davis P."/>
            <person name="Feltwell T."/>
            <person name="Fraser A."/>
            <person name="Gentles S."/>
            <person name="Goble A."/>
            <person name="Hamlin N."/>
            <person name="Harris D.E."/>
            <person name="Hidalgo J."/>
            <person name="Hodgson G."/>
            <person name="Holroyd S."/>
            <person name="Hornsby T."/>
            <person name="Howarth S."/>
            <person name="Huckle E.J."/>
            <person name="Hunt S."/>
            <person name="Jagels K."/>
            <person name="James K.D."/>
            <person name="Jones L."/>
            <person name="Jones M."/>
            <person name="Leather S."/>
            <person name="McDonald S."/>
            <person name="McLean J."/>
            <person name="Mooney P."/>
            <person name="Moule S."/>
            <person name="Mungall K.L."/>
            <person name="Murphy L.D."/>
            <person name="Niblett D."/>
            <person name="Odell C."/>
            <person name="Oliver K."/>
            <person name="O'Neil S."/>
            <person name="Pearson D."/>
            <person name="Quail M.A."/>
            <person name="Rabbinowitsch E."/>
            <person name="Rutherford K.M."/>
            <person name="Rutter S."/>
            <person name="Saunders D."/>
            <person name="Seeger K."/>
            <person name="Sharp S."/>
            <person name="Skelton J."/>
            <person name="Simmonds M.N."/>
            <person name="Squares R."/>
            <person name="Squares S."/>
            <person name="Stevens K."/>
            <person name="Taylor K."/>
            <person name="Taylor R.G."/>
            <person name="Tivey A."/>
            <person name="Walsh S.V."/>
            <person name="Warren T."/>
            <person name="Whitehead S."/>
            <person name="Woodward J.R."/>
            <person name="Volckaert G."/>
            <person name="Aert R."/>
            <person name="Robben J."/>
            <person name="Grymonprez B."/>
            <person name="Weltjens I."/>
            <person name="Vanstreels E."/>
            <person name="Rieger M."/>
            <person name="Schaefer M."/>
            <person name="Mueller-Auer S."/>
            <person name="Gabel C."/>
            <person name="Fuchs M."/>
            <person name="Duesterhoeft A."/>
            <person name="Fritzc C."/>
            <person name="Holzer E."/>
            <person name="Moestl D."/>
            <person name="Hilbert H."/>
            <person name="Borzym K."/>
            <person name="Langer I."/>
            <person name="Beck A."/>
            <person name="Lehrach H."/>
            <person name="Reinhardt R."/>
            <person name="Pohl T.M."/>
            <person name="Eger P."/>
            <person name="Zimmermann W."/>
            <person name="Wedler H."/>
            <person name="Wambutt R."/>
            <person name="Purnelle B."/>
            <person name="Goffeau A."/>
            <person name="Cadieu E."/>
            <person name="Dreano S."/>
            <person name="Gloux S."/>
            <person name="Lelaure V."/>
            <person name="Mottier S."/>
            <person name="Galibert F."/>
            <person name="Aves S.J."/>
            <person name="Xiang Z."/>
            <person name="Hunt C."/>
            <person name="Moore K."/>
            <person name="Hurst S.M."/>
            <person name="Lucas M."/>
            <person name="Rochet M."/>
            <person name="Gaillardin C."/>
            <person name="Tallada V.A."/>
            <person name="Garzon A."/>
            <person name="Thode G."/>
            <person name="Daga R.R."/>
            <person name="Cruzado L."/>
            <person name="Jimenez J."/>
            <person name="Sanchez M."/>
            <person name="del Rey F."/>
            <person name="Benito J."/>
            <person name="Dominguez A."/>
            <person name="Revuelta J.L."/>
            <person name="Moreno S."/>
            <person name="Armstrong J."/>
            <person name="Forsburg S.L."/>
            <person name="Cerutti L."/>
            <person name="Lowe T."/>
            <person name="McCombie W.R."/>
            <person name="Paulsen I."/>
            <person name="Potashkin J."/>
            <person name="Shpakovski G.V."/>
            <person name="Ussery D."/>
            <person name="Barrell B.G."/>
            <person name="Nurse P."/>
        </authorList>
    </citation>
    <scope>NUCLEOTIDE SEQUENCE [LARGE SCALE GENOMIC DNA]</scope>
    <source>
        <strain>972 / ATCC 24843</strain>
    </source>
</reference>
<reference key="2">
    <citation type="journal article" date="2011" name="Science">
        <title>Comparative functional genomics of the fission yeasts.</title>
        <authorList>
            <person name="Rhind N."/>
            <person name="Chen Z."/>
            <person name="Yassour M."/>
            <person name="Thompson D.A."/>
            <person name="Haas B.J."/>
            <person name="Habib N."/>
            <person name="Wapinski I."/>
            <person name="Roy S."/>
            <person name="Lin M.F."/>
            <person name="Heiman D.I."/>
            <person name="Young S.K."/>
            <person name="Furuya K."/>
            <person name="Guo Y."/>
            <person name="Pidoux A."/>
            <person name="Chen H.M."/>
            <person name="Robbertse B."/>
            <person name="Goldberg J.M."/>
            <person name="Aoki K."/>
            <person name="Bayne E.H."/>
            <person name="Berlin A.M."/>
            <person name="Desjardins C.A."/>
            <person name="Dobbs E."/>
            <person name="Dukaj L."/>
            <person name="Fan L."/>
            <person name="FitzGerald M.G."/>
            <person name="French C."/>
            <person name="Gujja S."/>
            <person name="Hansen K."/>
            <person name="Keifenheim D."/>
            <person name="Levin J.Z."/>
            <person name="Mosher R.A."/>
            <person name="Mueller C.A."/>
            <person name="Pfiffner J."/>
            <person name="Priest M."/>
            <person name="Russ C."/>
            <person name="Smialowska A."/>
            <person name="Swoboda P."/>
            <person name="Sykes S.M."/>
            <person name="Vaughn M."/>
            <person name="Vengrova S."/>
            <person name="Yoder R."/>
            <person name="Zeng Q."/>
            <person name="Allshire R."/>
            <person name="Baulcombe D."/>
            <person name="Birren B.W."/>
            <person name="Brown W."/>
            <person name="Ekwall K."/>
            <person name="Kellis M."/>
            <person name="Leatherwood J."/>
            <person name="Levin H."/>
            <person name="Margalit H."/>
            <person name="Martienssen R."/>
            <person name="Nieduszynski C.A."/>
            <person name="Spatafora J.W."/>
            <person name="Friedman N."/>
            <person name="Dalgaard J.Z."/>
            <person name="Baumann P."/>
            <person name="Niki H."/>
            <person name="Regev A."/>
            <person name="Nusbaum C."/>
        </authorList>
    </citation>
    <scope>REVISION OF GENE MODEL</scope>
</reference>
<reference key="3">
    <citation type="journal article" date="2006" name="Nat. Biotechnol.">
        <title>ORFeome cloning and global analysis of protein localization in the fission yeast Schizosaccharomyces pombe.</title>
        <authorList>
            <person name="Matsuyama A."/>
            <person name="Arai R."/>
            <person name="Yashiroda Y."/>
            <person name="Shirai A."/>
            <person name="Kamata A."/>
            <person name="Sekido S."/>
            <person name="Kobayashi Y."/>
            <person name="Hashimoto A."/>
            <person name="Hamamoto M."/>
            <person name="Hiraoka Y."/>
            <person name="Horinouchi S."/>
            <person name="Yoshida M."/>
        </authorList>
    </citation>
    <scope>SUBCELLULAR LOCATION [LARGE SCALE ANALYSIS]</scope>
</reference>
<evidence type="ECO:0000250" key="1"/>
<evidence type="ECO:0000255" key="2"/>
<evidence type="ECO:0000269" key="3">
    <source>
    </source>
</evidence>
<evidence type="ECO:0000305" key="4"/>
<keyword id="KW-0143">Chaperone</keyword>
<keyword id="KW-0496">Mitochondrion</keyword>
<keyword id="KW-1185">Reference proteome</keyword>
<keyword id="KW-0809">Transit peptide</keyword>
<feature type="transit peptide" description="Mitochondrion" evidence="2">
    <location>
        <begin position="1"/>
        <end position="10"/>
    </location>
</feature>
<feature type="chain" id="PRO_0000002420" description="Protein atp12, mitochondrial">
    <location>
        <begin position="11"/>
        <end position="291"/>
    </location>
</feature>
<accession>Q9UT16</accession>
<proteinExistence type="inferred from homology"/>